<sequence length="138" mass="15571">MWKDLPQNVPRIPRIQVPAAAADNSLLKDLNQGQRCYLYSIMRIYDSRPQWKALQTRYIHSLGYQQHLGYITQQEALSCAAVLRHSTMRASATVAPQRTILPRVFSHAKKGQPAKPGFRVGSRASLHSMLSTKTLDKA</sequence>
<feature type="chain" id="PRO_0000350568" description="Protein FAM216B">
    <location>
        <begin position="1"/>
        <end position="138"/>
    </location>
</feature>
<reference key="1">
    <citation type="journal article" date="2005" name="Science">
        <title>The transcriptional landscape of the mammalian genome.</title>
        <authorList>
            <person name="Carninci P."/>
            <person name="Kasukawa T."/>
            <person name="Katayama S."/>
            <person name="Gough J."/>
            <person name="Frith M.C."/>
            <person name="Maeda N."/>
            <person name="Oyama R."/>
            <person name="Ravasi T."/>
            <person name="Lenhard B."/>
            <person name="Wells C."/>
            <person name="Kodzius R."/>
            <person name="Shimokawa K."/>
            <person name="Bajic V.B."/>
            <person name="Brenner S.E."/>
            <person name="Batalov S."/>
            <person name="Forrest A.R."/>
            <person name="Zavolan M."/>
            <person name="Davis M.J."/>
            <person name="Wilming L.G."/>
            <person name="Aidinis V."/>
            <person name="Allen J.E."/>
            <person name="Ambesi-Impiombato A."/>
            <person name="Apweiler R."/>
            <person name="Aturaliya R.N."/>
            <person name="Bailey T.L."/>
            <person name="Bansal M."/>
            <person name="Baxter L."/>
            <person name="Beisel K.W."/>
            <person name="Bersano T."/>
            <person name="Bono H."/>
            <person name="Chalk A.M."/>
            <person name="Chiu K.P."/>
            <person name="Choudhary V."/>
            <person name="Christoffels A."/>
            <person name="Clutterbuck D.R."/>
            <person name="Crowe M.L."/>
            <person name="Dalla E."/>
            <person name="Dalrymple B.P."/>
            <person name="de Bono B."/>
            <person name="Della Gatta G."/>
            <person name="di Bernardo D."/>
            <person name="Down T."/>
            <person name="Engstrom P."/>
            <person name="Fagiolini M."/>
            <person name="Faulkner G."/>
            <person name="Fletcher C.F."/>
            <person name="Fukushima T."/>
            <person name="Furuno M."/>
            <person name="Futaki S."/>
            <person name="Gariboldi M."/>
            <person name="Georgii-Hemming P."/>
            <person name="Gingeras T.R."/>
            <person name="Gojobori T."/>
            <person name="Green R.E."/>
            <person name="Gustincich S."/>
            <person name="Harbers M."/>
            <person name="Hayashi Y."/>
            <person name="Hensch T.K."/>
            <person name="Hirokawa N."/>
            <person name="Hill D."/>
            <person name="Huminiecki L."/>
            <person name="Iacono M."/>
            <person name="Ikeo K."/>
            <person name="Iwama A."/>
            <person name="Ishikawa T."/>
            <person name="Jakt M."/>
            <person name="Kanapin A."/>
            <person name="Katoh M."/>
            <person name="Kawasawa Y."/>
            <person name="Kelso J."/>
            <person name="Kitamura H."/>
            <person name="Kitano H."/>
            <person name="Kollias G."/>
            <person name="Krishnan S.P."/>
            <person name="Kruger A."/>
            <person name="Kummerfeld S.K."/>
            <person name="Kurochkin I.V."/>
            <person name="Lareau L.F."/>
            <person name="Lazarevic D."/>
            <person name="Lipovich L."/>
            <person name="Liu J."/>
            <person name="Liuni S."/>
            <person name="McWilliam S."/>
            <person name="Madan Babu M."/>
            <person name="Madera M."/>
            <person name="Marchionni L."/>
            <person name="Matsuda H."/>
            <person name="Matsuzawa S."/>
            <person name="Miki H."/>
            <person name="Mignone F."/>
            <person name="Miyake S."/>
            <person name="Morris K."/>
            <person name="Mottagui-Tabar S."/>
            <person name="Mulder N."/>
            <person name="Nakano N."/>
            <person name="Nakauchi H."/>
            <person name="Ng P."/>
            <person name="Nilsson R."/>
            <person name="Nishiguchi S."/>
            <person name="Nishikawa S."/>
            <person name="Nori F."/>
            <person name="Ohara O."/>
            <person name="Okazaki Y."/>
            <person name="Orlando V."/>
            <person name="Pang K.C."/>
            <person name="Pavan W.J."/>
            <person name="Pavesi G."/>
            <person name="Pesole G."/>
            <person name="Petrovsky N."/>
            <person name="Piazza S."/>
            <person name="Reed J."/>
            <person name="Reid J.F."/>
            <person name="Ring B.Z."/>
            <person name="Ringwald M."/>
            <person name="Rost B."/>
            <person name="Ruan Y."/>
            <person name="Salzberg S.L."/>
            <person name="Sandelin A."/>
            <person name="Schneider C."/>
            <person name="Schoenbach C."/>
            <person name="Sekiguchi K."/>
            <person name="Semple C.A."/>
            <person name="Seno S."/>
            <person name="Sessa L."/>
            <person name="Sheng Y."/>
            <person name="Shibata Y."/>
            <person name="Shimada H."/>
            <person name="Shimada K."/>
            <person name="Silva D."/>
            <person name="Sinclair B."/>
            <person name="Sperling S."/>
            <person name="Stupka E."/>
            <person name="Sugiura K."/>
            <person name="Sultana R."/>
            <person name="Takenaka Y."/>
            <person name="Taki K."/>
            <person name="Tammoja K."/>
            <person name="Tan S.L."/>
            <person name="Tang S."/>
            <person name="Taylor M.S."/>
            <person name="Tegner J."/>
            <person name="Teichmann S.A."/>
            <person name="Ueda H.R."/>
            <person name="van Nimwegen E."/>
            <person name="Verardo R."/>
            <person name="Wei C.L."/>
            <person name="Yagi K."/>
            <person name="Yamanishi H."/>
            <person name="Zabarovsky E."/>
            <person name="Zhu S."/>
            <person name="Zimmer A."/>
            <person name="Hide W."/>
            <person name="Bult C."/>
            <person name="Grimmond S.M."/>
            <person name="Teasdale R.D."/>
            <person name="Liu E.T."/>
            <person name="Brusic V."/>
            <person name="Quackenbush J."/>
            <person name="Wahlestedt C."/>
            <person name="Mattick J.S."/>
            <person name="Hume D.A."/>
            <person name="Kai C."/>
            <person name="Sasaki D."/>
            <person name="Tomaru Y."/>
            <person name="Fukuda S."/>
            <person name="Kanamori-Katayama M."/>
            <person name="Suzuki M."/>
            <person name="Aoki J."/>
            <person name="Arakawa T."/>
            <person name="Iida J."/>
            <person name="Imamura K."/>
            <person name="Itoh M."/>
            <person name="Kato T."/>
            <person name="Kawaji H."/>
            <person name="Kawagashira N."/>
            <person name="Kawashima T."/>
            <person name="Kojima M."/>
            <person name="Kondo S."/>
            <person name="Konno H."/>
            <person name="Nakano K."/>
            <person name="Ninomiya N."/>
            <person name="Nishio T."/>
            <person name="Okada M."/>
            <person name="Plessy C."/>
            <person name="Shibata K."/>
            <person name="Shiraki T."/>
            <person name="Suzuki S."/>
            <person name="Tagami M."/>
            <person name="Waki K."/>
            <person name="Watahiki A."/>
            <person name="Okamura-Oho Y."/>
            <person name="Suzuki H."/>
            <person name="Kawai J."/>
            <person name="Hayashizaki Y."/>
        </authorList>
    </citation>
    <scope>NUCLEOTIDE SEQUENCE [LARGE SCALE MRNA]</scope>
    <source>
        <strain>C57BL/6J</strain>
        <tissue>Diencephalon</tissue>
    </source>
</reference>
<reference key="2">
    <citation type="journal article" date="2004" name="Genome Res.">
        <title>The status, quality, and expansion of the NIH full-length cDNA project: the Mammalian Gene Collection (MGC).</title>
        <authorList>
            <consortium name="The MGC Project Team"/>
        </authorList>
    </citation>
    <scope>NUCLEOTIDE SEQUENCE [LARGE SCALE MRNA]</scope>
    <source>
        <tissue>Brain</tissue>
    </source>
</reference>
<protein>
    <recommendedName>
        <fullName>Protein FAM216B</fullName>
    </recommendedName>
</protein>
<accession>Q8CC14</accession>
<gene>
    <name type="primary">Fam216b</name>
</gene>
<evidence type="ECO:0000305" key="1"/>
<name>F216B_MOUSE</name>
<dbReference type="EMBL" id="AK034132">
    <property type="protein sequence ID" value="BAC28599.1"/>
    <property type="molecule type" value="mRNA"/>
</dbReference>
<dbReference type="EMBL" id="BC120488">
    <property type="protein sequence ID" value="AAI20489.1"/>
    <property type="molecule type" value="mRNA"/>
</dbReference>
<dbReference type="EMBL" id="BC120490">
    <property type="protein sequence ID" value="AAI20491.1"/>
    <property type="molecule type" value="mRNA"/>
</dbReference>
<dbReference type="CCDS" id="CCDS27293.1"/>
<dbReference type="RefSeq" id="NP_808297.1">
    <property type="nucleotide sequence ID" value="NM_177629.4"/>
</dbReference>
<dbReference type="STRING" id="10090.ENSMUSP00000064524"/>
<dbReference type="PaxDb" id="10090-ENSMUSP00000064524"/>
<dbReference type="ProteomicsDB" id="275729"/>
<dbReference type="Antibodypedia" id="42211">
    <property type="antibodies" value="46 antibodies from 17 providers"/>
</dbReference>
<dbReference type="DNASU" id="219170"/>
<dbReference type="Ensembl" id="ENSMUST00000066437.5">
    <property type="protein sequence ID" value="ENSMUSP00000064524.5"/>
    <property type="gene ID" value="ENSMUSG00000045655.10"/>
</dbReference>
<dbReference type="GeneID" id="219170"/>
<dbReference type="KEGG" id="mmu:219170"/>
<dbReference type="UCSC" id="uc007usg.1">
    <property type="organism name" value="mouse"/>
</dbReference>
<dbReference type="AGR" id="MGI:2145738"/>
<dbReference type="CTD" id="144809"/>
<dbReference type="MGI" id="MGI:2145738">
    <property type="gene designation" value="Fam216b"/>
</dbReference>
<dbReference type="VEuPathDB" id="HostDB:ENSMUSG00000045655"/>
<dbReference type="eggNOG" id="ENOG502SAWN">
    <property type="taxonomic scope" value="Eukaryota"/>
</dbReference>
<dbReference type="GeneTree" id="ENSGT00940000154512"/>
<dbReference type="HOGENOM" id="CLU_125533_0_0_1"/>
<dbReference type="InParanoid" id="Q8CC14"/>
<dbReference type="OMA" id="RVPHSIY"/>
<dbReference type="OrthoDB" id="9902980at2759"/>
<dbReference type="PhylomeDB" id="Q8CC14"/>
<dbReference type="TreeFam" id="TF337013"/>
<dbReference type="BioGRID-ORCS" id="219170">
    <property type="hits" value="2 hits in 75 CRISPR screens"/>
</dbReference>
<dbReference type="PRO" id="PR:Q8CC14"/>
<dbReference type="Proteomes" id="UP000000589">
    <property type="component" value="Chromosome 14"/>
</dbReference>
<dbReference type="RNAct" id="Q8CC14">
    <property type="molecule type" value="protein"/>
</dbReference>
<dbReference type="Bgee" id="ENSMUSG00000045655">
    <property type="expression patterns" value="Expressed in otolith organ and 48 other cell types or tissues"/>
</dbReference>
<dbReference type="ExpressionAtlas" id="Q8CC14">
    <property type="expression patterns" value="baseline and differential"/>
</dbReference>
<dbReference type="InterPro" id="IPR029373">
    <property type="entry name" value="FAM216"/>
</dbReference>
<dbReference type="PANTHER" id="PTHR16476">
    <property type="entry name" value="FAMILY WITH SEQUENCE SIMILARITY 216 MEMBER A"/>
    <property type="match status" value="1"/>
</dbReference>
<dbReference type="PANTHER" id="PTHR16476:SF3">
    <property type="entry name" value="PROTEIN FAM216B"/>
    <property type="match status" value="1"/>
</dbReference>
<dbReference type="Pfam" id="PF15107">
    <property type="entry name" value="FAM216B"/>
    <property type="match status" value="1"/>
</dbReference>
<organism>
    <name type="scientific">Mus musculus</name>
    <name type="common">Mouse</name>
    <dbReference type="NCBI Taxonomy" id="10090"/>
    <lineage>
        <taxon>Eukaryota</taxon>
        <taxon>Metazoa</taxon>
        <taxon>Chordata</taxon>
        <taxon>Craniata</taxon>
        <taxon>Vertebrata</taxon>
        <taxon>Euteleostomi</taxon>
        <taxon>Mammalia</taxon>
        <taxon>Eutheria</taxon>
        <taxon>Euarchontoglires</taxon>
        <taxon>Glires</taxon>
        <taxon>Rodentia</taxon>
        <taxon>Myomorpha</taxon>
        <taxon>Muroidea</taxon>
        <taxon>Muridae</taxon>
        <taxon>Murinae</taxon>
        <taxon>Mus</taxon>
        <taxon>Mus</taxon>
    </lineage>
</organism>
<comment type="similarity">
    <text evidence="1">Belongs to the FAM216 family.</text>
</comment>
<keyword id="KW-1185">Reference proteome</keyword>
<proteinExistence type="evidence at transcript level"/>